<comment type="function">
    <text evidence="1">Involved in the degradation of certain denaturated proteins, including DnaA, during heat shock stress.</text>
</comment>
<comment type="subcellular location">
    <subcellularLocation>
        <location evidence="1">Cytoplasm</location>
    </subcellularLocation>
</comment>
<comment type="similarity">
    <text evidence="1">Belongs to the HspQ family.</text>
</comment>
<reference key="1">
    <citation type="journal article" date="2010" name="J. Bacteriol.">
        <title>Genome sequence of the deep-rooted Yersinia pestis strain Angola reveals new insights into the evolution and pangenome of the plague bacterium.</title>
        <authorList>
            <person name="Eppinger M."/>
            <person name="Worsham P.L."/>
            <person name="Nikolich M.P."/>
            <person name="Riley D.R."/>
            <person name="Sebastian Y."/>
            <person name="Mou S."/>
            <person name="Achtman M."/>
            <person name="Lindler L.E."/>
            <person name="Ravel J."/>
        </authorList>
    </citation>
    <scope>NUCLEOTIDE SEQUENCE [LARGE SCALE GENOMIC DNA]</scope>
    <source>
        <strain>Angola</strain>
    </source>
</reference>
<dbReference type="EMBL" id="CP000901">
    <property type="protein sequence ID" value="ABX86724.1"/>
    <property type="molecule type" value="Genomic_DNA"/>
</dbReference>
<dbReference type="RefSeq" id="WP_002213054.1">
    <property type="nucleotide sequence ID" value="NZ_CP009935.1"/>
</dbReference>
<dbReference type="SMR" id="A9R2N8"/>
<dbReference type="GeneID" id="57977119"/>
<dbReference type="KEGG" id="ypg:YpAngola_A3208"/>
<dbReference type="PATRIC" id="fig|349746.12.peg.4269"/>
<dbReference type="GO" id="GO:0005737">
    <property type="term" value="C:cytoplasm"/>
    <property type="evidence" value="ECO:0007669"/>
    <property type="project" value="UniProtKB-SubCell"/>
</dbReference>
<dbReference type="GO" id="GO:0003677">
    <property type="term" value="F:DNA binding"/>
    <property type="evidence" value="ECO:0007669"/>
    <property type="project" value="InterPro"/>
</dbReference>
<dbReference type="GO" id="GO:0009408">
    <property type="term" value="P:response to heat"/>
    <property type="evidence" value="ECO:0007669"/>
    <property type="project" value="UniProtKB-UniRule"/>
</dbReference>
<dbReference type="Gene3D" id="2.30.30.390">
    <property type="entry name" value="Hemimethylated DNA-binding domain"/>
    <property type="match status" value="1"/>
</dbReference>
<dbReference type="HAMAP" id="MF_01194">
    <property type="entry name" value="HspQ"/>
    <property type="match status" value="1"/>
</dbReference>
<dbReference type="InterPro" id="IPR011722">
    <property type="entry name" value="Hemimethylated_DNA-bd_dom"/>
</dbReference>
<dbReference type="InterPro" id="IPR036623">
    <property type="entry name" value="Hemimethylated_DNA-bd_sf"/>
</dbReference>
<dbReference type="InterPro" id="IPR022866">
    <property type="entry name" value="HspQ"/>
</dbReference>
<dbReference type="NCBIfam" id="NF010729">
    <property type="entry name" value="PRK14129.1"/>
    <property type="match status" value="1"/>
</dbReference>
<dbReference type="NCBIfam" id="TIGR02097">
    <property type="entry name" value="yccV"/>
    <property type="match status" value="1"/>
</dbReference>
<dbReference type="Pfam" id="PF08755">
    <property type="entry name" value="YccV-like"/>
    <property type="match status" value="1"/>
</dbReference>
<dbReference type="SMART" id="SM00992">
    <property type="entry name" value="YccV-like"/>
    <property type="match status" value="1"/>
</dbReference>
<dbReference type="SUPFAM" id="SSF141255">
    <property type="entry name" value="YccV-like"/>
    <property type="match status" value="1"/>
</dbReference>
<accession>A9R2N8</accession>
<sequence length="105" mass="11763">MIASKFGIGQQVRHSLHGYLGVVIDIDPEYSLAPPEPDEVANNKTLRSSPWYHVVIEDDDGQPVHTYLAEAQLTYEDVDAHPEQPSLDELAASIRHQLQAPHLRN</sequence>
<name>HSPQ_YERPG</name>
<evidence type="ECO:0000255" key="1">
    <source>
        <dbReference type="HAMAP-Rule" id="MF_01194"/>
    </source>
</evidence>
<evidence type="ECO:0000256" key="2">
    <source>
        <dbReference type="SAM" id="MobiDB-lite"/>
    </source>
</evidence>
<feature type="chain" id="PRO_1000138423" description="Heat shock protein HspQ">
    <location>
        <begin position="1"/>
        <end position="105"/>
    </location>
</feature>
<feature type="region of interest" description="Disordered" evidence="2">
    <location>
        <begin position="80"/>
        <end position="105"/>
    </location>
</feature>
<gene>
    <name evidence="1" type="primary">hspQ</name>
    <name type="ordered locus">YpAngola_A3208</name>
</gene>
<protein>
    <recommendedName>
        <fullName evidence="1">Heat shock protein HspQ</fullName>
    </recommendedName>
</protein>
<proteinExistence type="inferred from homology"/>
<keyword id="KW-0963">Cytoplasm</keyword>
<keyword id="KW-0346">Stress response</keyword>
<organism>
    <name type="scientific">Yersinia pestis bv. Antiqua (strain Angola)</name>
    <dbReference type="NCBI Taxonomy" id="349746"/>
    <lineage>
        <taxon>Bacteria</taxon>
        <taxon>Pseudomonadati</taxon>
        <taxon>Pseudomonadota</taxon>
        <taxon>Gammaproteobacteria</taxon>
        <taxon>Enterobacterales</taxon>
        <taxon>Yersiniaceae</taxon>
        <taxon>Yersinia</taxon>
    </lineage>
</organism>